<gene>
    <name type="ORF">FV3-088R</name>
</gene>
<evidence type="ECO:0000255" key="1">
    <source>
        <dbReference type="PROSITE-ProRule" id="PRU00654"/>
    </source>
</evidence>
<keyword id="KW-1015">Disulfide bond</keyword>
<keyword id="KW-0274">FAD</keyword>
<keyword id="KW-0285">Flavoprotein</keyword>
<keyword id="KW-0560">Oxidoreductase</keyword>
<keyword id="KW-1185">Reference proteome</keyword>
<feature type="chain" id="PRO_0000410589" description="Putative FAD-linked sulfhydryl oxidase 088R">
    <location>
        <begin position="1"/>
        <end position="150"/>
    </location>
</feature>
<feature type="domain" description="ERV/ALR sulfhydryl oxidase" evidence="1">
    <location>
        <begin position="24"/>
        <end position="128"/>
    </location>
</feature>
<feature type="disulfide bond" description="Redox-active" evidence="1">
    <location>
        <begin position="74"/>
        <end position="77"/>
    </location>
</feature>
<organismHost>
    <name type="scientific">Dryophytes versicolor</name>
    <name type="common">chameleon treefrog</name>
    <dbReference type="NCBI Taxonomy" id="30343"/>
</organismHost>
<organismHost>
    <name type="scientific">Lithobates pipiens</name>
    <name type="common">Northern leopard frog</name>
    <name type="synonym">Rana pipiens</name>
    <dbReference type="NCBI Taxonomy" id="8404"/>
</organismHost>
<organismHost>
    <name type="scientific">Lithobates sylvaticus</name>
    <name type="common">Wood frog</name>
    <name type="synonym">Rana sylvatica</name>
    <dbReference type="NCBI Taxonomy" id="45438"/>
</organismHost>
<organismHost>
    <name type="scientific">Notophthalmus viridescens</name>
    <name type="common">Eastern newt</name>
    <name type="synonym">Triturus viridescens</name>
    <dbReference type="NCBI Taxonomy" id="8316"/>
</organismHost>
<sequence length="150" mass="16507">MHGCNCNRVSGHLSAVRSSGLENGPFGPSGFGPSMWFTMHSGAAERAIRGGYLTENEKAAWESWLRNLWVCIPCESCRRHYMGIVNAVDFGSVNTGDKVFRLTVDIHNMVNARLNKPHVTLQKAICIYGLDTKLGPASTITFRANTSTFN</sequence>
<accession>Q6GZN7</accession>
<protein>
    <recommendedName>
        <fullName>Putative FAD-linked sulfhydryl oxidase 088R</fullName>
        <ecNumber>1.8.3.2</ecNumber>
    </recommendedName>
</protein>
<comment type="function">
    <text evidence="1">FAD-dependent sulfhydryl oxidase that catalyzes disulfide bond formation.</text>
</comment>
<comment type="catalytic activity">
    <reaction>
        <text>2 R'C(R)SH + O2 = R'C(R)S-S(R)CR' + H2O2</text>
        <dbReference type="Rhea" id="RHEA:17357"/>
        <dbReference type="ChEBI" id="CHEBI:15379"/>
        <dbReference type="ChEBI" id="CHEBI:16240"/>
        <dbReference type="ChEBI" id="CHEBI:16520"/>
        <dbReference type="ChEBI" id="CHEBI:17412"/>
        <dbReference type="EC" id="1.8.3.2"/>
    </reaction>
</comment>
<comment type="cofactor">
    <cofactor evidence="1">
        <name>FAD</name>
        <dbReference type="ChEBI" id="CHEBI:57692"/>
    </cofactor>
</comment>
<name>088R_FRG3G</name>
<proteinExistence type="inferred from homology"/>
<organism>
    <name type="scientific">Frog virus 3 (isolate Goorha)</name>
    <name type="common">FV-3</name>
    <dbReference type="NCBI Taxonomy" id="654924"/>
    <lineage>
        <taxon>Viruses</taxon>
        <taxon>Varidnaviria</taxon>
        <taxon>Bamfordvirae</taxon>
        <taxon>Nucleocytoviricota</taxon>
        <taxon>Megaviricetes</taxon>
        <taxon>Pimascovirales</taxon>
        <taxon>Iridoviridae</taxon>
        <taxon>Alphairidovirinae</taxon>
        <taxon>Ranavirus</taxon>
        <taxon>Frog virus 3</taxon>
    </lineage>
</organism>
<dbReference type="EC" id="1.8.3.2"/>
<dbReference type="EMBL" id="AY548484">
    <property type="protein sequence ID" value="AAT09748.1"/>
    <property type="molecule type" value="Genomic_DNA"/>
</dbReference>
<dbReference type="RefSeq" id="YP_031667.1">
    <property type="nucleotide sequence ID" value="NC_005946.1"/>
</dbReference>
<dbReference type="SMR" id="Q6GZN7"/>
<dbReference type="KEGG" id="vg:2947807"/>
<dbReference type="Proteomes" id="UP000008770">
    <property type="component" value="Segment"/>
</dbReference>
<dbReference type="GO" id="GO:0016972">
    <property type="term" value="F:thiol oxidase activity"/>
    <property type="evidence" value="ECO:0007669"/>
    <property type="project" value="UniProtKB-EC"/>
</dbReference>
<dbReference type="Gene3D" id="1.20.120.310">
    <property type="entry name" value="ERV/ALR sulfhydryl oxidase domain"/>
    <property type="match status" value="1"/>
</dbReference>
<dbReference type="InterPro" id="IPR036774">
    <property type="entry name" value="ERV/ALR_sulphydryl_oxid_sf"/>
</dbReference>
<dbReference type="InterPro" id="IPR017905">
    <property type="entry name" value="ERV/ALR_sulphydryl_oxidase"/>
</dbReference>
<dbReference type="Pfam" id="PF04777">
    <property type="entry name" value="Evr1_Alr"/>
    <property type="match status" value="1"/>
</dbReference>
<dbReference type="SUPFAM" id="SSF69000">
    <property type="entry name" value="FAD-dependent thiol oxidase"/>
    <property type="match status" value="1"/>
</dbReference>
<dbReference type="PROSITE" id="PS51324">
    <property type="entry name" value="ERV_ALR"/>
    <property type="match status" value="1"/>
</dbReference>
<reference key="1">
    <citation type="journal article" date="2004" name="Virology">
        <title>Comparative genomic analyses of frog virus 3, type species of the genus Ranavirus (family Iridoviridae).</title>
        <authorList>
            <person name="Tan W.G."/>
            <person name="Barkman T.J."/>
            <person name="Gregory Chinchar V."/>
            <person name="Essani K."/>
        </authorList>
    </citation>
    <scope>NUCLEOTIDE SEQUENCE [LARGE SCALE GENOMIC DNA]</scope>
</reference>